<proteinExistence type="evidence at protein level"/>
<sequence length="63" mass="7203">TITLEVEPSDTIENVKAKIQDKEGIPPDQQRLIFAGKQLEDGRTLSDYNIQKESTLHLVLRLR</sequence>
<accession>P84589</accession>
<evidence type="ECO:0000250" key="1"/>
<evidence type="ECO:0000250" key="2">
    <source>
        <dbReference type="UniProtKB" id="P62990"/>
    </source>
</evidence>
<evidence type="ECO:0000255" key="3"/>
<evidence type="ECO:0000255" key="4">
    <source>
        <dbReference type="PROSITE-ProRule" id="PRU00214"/>
    </source>
</evidence>
<evidence type="ECO:0000303" key="5">
    <source ref="1"/>
</evidence>
<evidence type="ECO:0000305" key="6"/>
<reference evidence="6" key="1">
    <citation type="journal article" date="2006" name="Invertebr. Reprod. Dev.">
        <title>Allohormones in Lumbricus terrestris? Mass spectrometry of the setal gland product indicates role of ubiquitin.</title>
        <authorList>
            <person name="Koenig S."/>
            <person name="Mehlich A.-M."/>
            <person name="Buellesbach J."/>
            <person name="Michiels N."/>
        </authorList>
    </citation>
    <scope>PROTEIN SEQUENCE</scope>
</reference>
<protein>
    <recommendedName>
        <fullName>Ubiquitin</fullName>
    </recommendedName>
</protein>
<dbReference type="SMR" id="P84589"/>
<dbReference type="GO" id="GO:0005737">
    <property type="term" value="C:cytoplasm"/>
    <property type="evidence" value="ECO:0007669"/>
    <property type="project" value="UniProtKB-SubCell"/>
</dbReference>
<dbReference type="GO" id="GO:0005634">
    <property type="term" value="C:nucleus"/>
    <property type="evidence" value="ECO:0007669"/>
    <property type="project" value="UniProtKB-SubCell"/>
</dbReference>
<dbReference type="FunFam" id="3.10.20.90:FF:000009">
    <property type="entry name" value="Ubiquitin-60S ribosomal protein"/>
    <property type="match status" value="1"/>
</dbReference>
<dbReference type="Gene3D" id="3.10.20.90">
    <property type="entry name" value="Phosphatidylinositol 3-kinase Catalytic Subunit, Chain A, domain 1"/>
    <property type="match status" value="1"/>
</dbReference>
<dbReference type="InterPro" id="IPR000626">
    <property type="entry name" value="Ubiquitin-like_dom"/>
</dbReference>
<dbReference type="InterPro" id="IPR029071">
    <property type="entry name" value="Ubiquitin-like_domsf"/>
</dbReference>
<dbReference type="InterPro" id="IPR019954">
    <property type="entry name" value="Ubiquitin_CS"/>
</dbReference>
<dbReference type="InterPro" id="IPR019956">
    <property type="entry name" value="Ubiquitin_dom"/>
</dbReference>
<dbReference type="InterPro" id="IPR050158">
    <property type="entry name" value="Ubiquitin_ubiquitin-like"/>
</dbReference>
<dbReference type="PANTHER" id="PTHR10666">
    <property type="entry name" value="UBIQUITIN"/>
    <property type="match status" value="1"/>
</dbReference>
<dbReference type="Pfam" id="PF00240">
    <property type="entry name" value="ubiquitin"/>
    <property type="match status" value="1"/>
</dbReference>
<dbReference type="PRINTS" id="PR00348">
    <property type="entry name" value="UBIQUITIN"/>
</dbReference>
<dbReference type="SMART" id="SM00213">
    <property type="entry name" value="UBQ"/>
    <property type="match status" value="1"/>
</dbReference>
<dbReference type="SUPFAM" id="SSF54236">
    <property type="entry name" value="Ubiquitin-like"/>
    <property type="match status" value="1"/>
</dbReference>
<dbReference type="PROSITE" id="PS00299">
    <property type="entry name" value="UBIQUITIN_1"/>
    <property type="match status" value="1"/>
</dbReference>
<dbReference type="PROSITE" id="PS50053">
    <property type="entry name" value="UBIQUITIN_2"/>
    <property type="match status" value="1"/>
</dbReference>
<comment type="function">
    <text evidence="1">Ubiquitin exists either covalently attached to another protein, or free (unanchored). When covalently bound, it is conjugated to target proteins via an isopeptide bond either as a monomer (monoubiquitin), a polymer linked via different Lys residues of the ubiquitin (polyubiquitin chains) or a linear polymer linked via the initiator Met of the ubiquitin (linear polyubiquitin chains). Polyubiquitin chains, when attached to a target protein, have different functions depending on the Lys residue of the ubiquitin that is linked: Lys-6-linked may be involved in DNA repair; Lys-11-linked is involved in ERAD (endoplasmic reticulum-associated degradation) and in cell-cycle regulation; Lys-29-linked is involved in lysosomal degradation; Lys-33-linked is involved in kinase modification; Lys-48-linked is involved in protein degradation via the proteasome; Lys-63-linked is involved in endocytosis, DNA-damage responses as well as in signaling processes leading to activation of the transcription factor NF-kappa-B. Linear polymer chains formed via attachment by the initiator Met lead to cell signaling. Ubiquitin is usually conjugated to Lys residues of target proteins, however, in rare cases, conjugation to Cys or Ser residues has been observed. When polyubiquitin is free (unanchored-polyubiquitin), it also has distinct roles, such as in activation of protein kinases, and in signaling (By similarity).</text>
</comment>
<comment type="subcellular location">
    <subcellularLocation>
        <location evidence="2">Cytoplasm</location>
    </subcellularLocation>
    <subcellularLocation>
        <location evidence="2">Nucleus</location>
    </subcellularLocation>
</comment>
<comment type="similarity">
    <text evidence="3">Belongs to the ubiquitin family.</text>
</comment>
<keyword id="KW-0963">Cytoplasm</keyword>
<keyword id="KW-0903">Direct protein sequencing</keyword>
<keyword id="KW-1017">Isopeptide bond</keyword>
<keyword id="KW-0539">Nucleus</keyword>
<keyword id="KW-0832">Ubl conjugation</keyword>
<organism>
    <name type="scientific">Lumbricus terrestris</name>
    <name type="common">Common earthworm</name>
    <dbReference type="NCBI Taxonomy" id="6398"/>
    <lineage>
        <taxon>Eukaryota</taxon>
        <taxon>Metazoa</taxon>
        <taxon>Spiralia</taxon>
        <taxon>Lophotrochozoa</taxon>
        <taxon>Annelida</taxon>
        <taxon>Clitellata</taxon>
        <taxon>Oligochaeta</taxon>
        <taxon>Crassiclitellata</taxon>
        <taxon>Lumbricina</taxon>
        <taxon>Lumbricidae</taxon>
        <taxon>Lumbricinae</taxon>
        <taxon>Lumbricus</taxon>
    </lineage>
</organism>
<name>UBIQ_LUMTE</name>
<feature type="chain" id="PRO_0000114819" description="Ubiquitin">
    <location>
        <begin position="1" status="less than"/>
        <end position="63" status="greater than"/>
    </location>
</feature>
<feature type="domain" description="Ubiquitin-like" evidence="4">
    <location>
        <begin position="1" status="less than"/>
        <end position="63" status="greater than"/>
    </location>
</feature>
<feature type="site" description="Interacts with activating enzyme" evidence="6">
    <location>
        <position position="43"/>
    </location>
</feature>
<feature type="site" description="Essential for function" evidence="6">
    <location>
        <position position="57"/>
    </location>
</feature>
<feature type="site" description="Interacts with activating enzyme" evidence="6">
    <location>
        <position position="61"/>
    </location>
</feature>
<feature type="cross-link" description="Glycyl lysine isopeptide (Lys-Gly) (interchain with G-Cter in ubiquitin)" evidence="1">
    <location>
        <position position="37"/>
    </location>
</feature>
<feature type="non-terminal residue" evidence="5">
    <location>
        <position position="1"/>
    </location>
</feature>
<feature type="non-terminal residue" evidence="5">
    <location>
        <position position="63"/>
    </location>
</feature>